<name>LAMP1_CHICK</name>
<feature type="signal peptide">
    <location>
        <begin position="1"/>
        <end position="18"/>
    </location>
</feature>
<feature type="chain" id="PRO_0000017109" description="Lysosome-associated membrane glycoprotein 1">
    <location>
        <begin position="19"/>
        <end position="414"/>
    </location>
</feature>
<feature type="topological domain" description="Lumenal" evidence="2">
    <location>
        <begin position="19"/>
        <end position="379"/>
    </location>
</feature>
<feature type="transmembrane region" description="Helical" evidence="3">
    <location>
        <begin position="380"/>
        <end position="403"/>
    </location>
</feature>
<feature type="topological domain" description="Cytoplasmic" evidence="3">
    <location>
        <begin position="404"/>
        <end position="414"/>
    </location>
</feature>
<feature type="region of interest" description="First lumenal domain">
    <location>
        <begin position="19"/>
        <end position="181"/>
    </location>
</feature>
<feature type="region of interest" description="Hinge">
    <location>
        <begin position="182"/>
        <end position="224"/>
    </location>
</feature>
<feature type="region of interest" description="Disordered" evidence="4">
    <location>
        <begin position="186"/>
        <end position="213"/>
    </location>
</feature>
<feature type="region of interest" description="Second lumenal domain">
    <location>
        <begin position="225"/>
        <end position="379"/>
    </location>
</feature>
<feature type="compositionally biased region" description="Low complexity" evidence="4">
    <location>
        <begin position="196"/>
        <end position="213"/>
    </location>
</feature>
<feature type="glycosylation site" description="N-linked (GlcNAc...) asparagine" evidence="2">
    <location>
        <position position="33"/>
    </location>
</feature>
<feature type="glycosylation site" description="N-linked (GlcNAc...) asparagine" evidence="2">
    <location>
        <position position="58"/>
    </location>
</feature>
<feature type="glycosylation site" description="N-linked (GlcNAc...) asparagine" evidence="2">
    <location>
        <position position="71"/>
    </location>
</feature>
<feature type="glycosylation site" description="N-linked (GlcNAc...) asparagine" evidence="2">
    <location>
        <position position="90"/>
    </location>
</feature>
<feature type="glycosylation site" description="N-linked (GlcNAc...) asparagine" evidence="2">
    <location>
        <position position="108"/>
    </location>
</feature>
<feature type="glycosylation site" description="N-linked (GlcNAc...) asparagine" evidence="2">
    <location>
        <position position="117"/>
    </location>
</feature>
<feature type="glycosylation site" description="N-linked (GlcNAc...) asparagine" evidence="2">
    <location>
        <position position="154"/>
    </location>
</feature>
<feature type="glycosylation site" description="N-linked (GlcNAc...) asparagine" evidence="2">
    <location>
        <position position="159"/>
    </location>
</feature>
<feature type="glycosylation site" description="N-linked (GlcNAc...) asparagine" evidence="2">
    <location>
        <position position="168"/>
    </location>
</feature>
<feature type="glycosylation site" description="N-linked (GlcNAc...) asparagine" evidence="2">
    <location>
        <position position="174"/>
    </location>
</feature>
<feature type="glycosylation site" description="N-linked (GlcNAc...) asparagine" evidence="2">
    <location>
        <position position="220"/>
    </location>
</feature>
<feature type="glycosylation site" description="N-linked (GlcNAc...) asparagine" evidence="2">
    <location>
        <position position="225"/>
    </location>
</feature>
<feature type="glycosylation site" description="N-linked (GlcNAc...) asparagine" evidence="2">
    <location>
        <position position="238"/>
    </location>
</feature>
<feature type="glycosylation site" description="N-linked (GlcNAc...) asparagine" evidence="2">
    <location>
        <position position="259"/>
    </location>
</feature>
<feature type="glycosylation site" description="N-linked (GlcNAc...) asparagine" evidence="2">
    <location>
        <position position="289"/>
    </location>
</feature>
<feature type="glycosylation site" description="N-linked (GlcNAc...) asparagine" evidence="2">
    <location>
        <position position="301"/>
    </location>
</feature>
<feature type="glycosylation site" description="N-linked (GlcNAc...) asparagine" evidence="2">
    <location>
        <position position="319"/>
    </location>
</feature>
<feature type="disulfide bond" evidence="3">
    <location>
        <begin position="29"/>
        <end position="67"/>
    </location>
</feature>
<feature type="disulfide bond" evidence="3">
    <location>
        <begin position="142"/>
        <end position="178"/>
    </location>
</feature>
<feature type="disulfide bond" evidence="3">
    <location>
        <begin position="228"/>
        <end position="266"/>
    </location>
</feature>
<feature type="disulfide bond" evidence="3">
    <location>
        <begin position="335"/>
        <end position="372"/>
    </location>
</feature>
<feature type="sequence conflict" description="In Ref. 2; AAA65947." evidence="10" ref="2">
    <original>G</original>
    <variation>R</variation>
    <location>
        <position position="3"/>
    </location>
</feature>
<feature type="sequence conflict" description="In Ref. 2; AAA65947." evidence="10" ref="2">
    <original>V</original>
    <variation>I</variation>
    <location>
        <position position="148"/>
    </location>
</feature>
<feature type="sequence conflict" description="In Ref. 2; AAA65947." evidence="10" ref="2">
    <original>S</original>
    <variation>L</variation>
    <location>
        <position position="325"/>
    </location>
</feature>
<feature type="sequence conflict" description="In Ref. 2; AAA65947." evidence="10" ref="2">
    <original>M</original>
    <variation>V</variation>
    <location>
        <position position="369"/>
    </location>
</feature>
<proteinExistence type="evidence at transcript level"/>
<keyword id="KW-1003">Cell membrane</keyword>
<keyword id="KW-1015">Disulfide bond</keyword>
<keyword id="KW-0967">Endosome</keyword>
<keyword id="KW-0325">Glycoprotein</keyword>
<keyword id="KW-0458">Lysosome</keyword>
<keyword id="KW-0472">Membrane</keyword>
<keyword id="KW-1185">Reference proteome</keyword>
<keyword id="KW-0732">Signal</keyword>
<keyword id="KW-0812">Transmembrane</keyword>
<keyword id="KW-1133">Transmembrane helix</keyword>
<gene>
    <name type="primary">LAMP1</name>
</gene>
<accession>P05300</accession>
<comment type="function">
    <text evidence="1">Lysosomal membrane glycoprotein which plays an important role in lysosome biogenesis, lysosomal pH regulation, autophagy and cholesterol homeostasis.</text>
</comment>
<comment type="function">
    <text evidence="7">(Microbial infection) Plays an essential role in efficient replication and spread of Marek's disease virus, by facilitating viral cell-to-cell spread.</text>
</comment>
<comment type="subcellular location">
    <subcellularLocation>
        <location evidence="5 6">Lysosome membrane</location>
        <topology evidence="2">Single-pass type I membrane protein</topology>
    </subcellularLocation>
    <subcellularLocation>
        <location evidence="5 6">Endosome membrane</location>
        <topology evidence="2">Single-pass type I membrane protein</topology>
    </subcellularLocation>
    <subcellularLocation>
        <location evidence="1">Late endosome membrane</location>
        <topology evidence="2">Single-pass type I membrane protein</topology>
    </subcellularLocation>
    <subcellularLocation>
        <location evidence="5 6">Cell membrane</location>
        <topology evidence="2">Single-pass type I membrane protein</topology>
    </subcellularLocation>
    <subcellularLocation>
        <location evidence="1">Cytolytic granule membrane</location>
        <topology evidence="2">Single-pass type I membrane protein</topology>
    </subcellularLocation>
    <text evidence="5 6">This protein shuttles between lysosomes, endosomes, and the plasma membrane (PubMed:2871029, PubMed:3107839). Colocalizes with OSBPL1A at the late endosome (PubMed:3107839).</text>
</comment>
<comment type="similarity">
    <text evidence="3">Belongs to the LAMP family.</text>
</comment>
<reference key="1">
    <citation type="journal article" date="1988" name="J. Cell Biol.">
        <title>Structure of LEP100, a glycoprotein that shuttles between lysosomes and the plasma membrane, deduced from the nucleotide sequence of the encoding cDNA.</title>
        <authorList>
            <person name="Fambrough D.M."/>
            <person name="Takeyasu K."/>
            <person name="Lippincott-Schwarz J."/>
            <person name="Siegel N.R."/>
        </authorList>
    </citation>
    <scope>NUCLEOTIDE SEQUENCE [MRNA]</scope>
    <source>
        <tissue>Brain</tissue>
    </source>
</reference>
<reference key="2">
    <citation type="journal article" date="1990" name="J. Biol. Chem.">
        <title>Structure of a gene for a lysosomal membrane glycoprotein (LEP100). Housekeeping gene with unexpected exon organization.</title>
        <authorList>
            <person name="Zot A.S."/>
            <person name="Fambrough D.M."/>
        </authorList>
    </citation>
    <scope>NUCLEOTIDE SEQUENCE [GENOMIC DNA]</scope>
</reference>
<reference key="3">
    <citation type="journal article" date="1986" name="J. Cell Biol.">
        <title>Lysosomal membrane dynamics: structure and interorganellar movement of a major lysosomal membrane glycoprotein.</title>
        <authorList>
            <person name="Lippincott-Schwartz J."/>
            <person name="Fambrough D.M."/>
        </authorList>
    </citation>
    <scope>SUBCELLULAR LOCATION</scope>
</reference>
<reference key="4">
    <citation type="journal article" date="1987" name="Cell">
        <title>Cycling of the integral membrane glycoprotein, LEP100, between plasma membrane and lysosomes: kinetic and morphological analysis.</title>
        <authorList>
            <person name="Lippincott-Schwartz J."/>
            <person name="Fambrough D.M."/>
        </authorList>
    </citation>
    <scope>SUBCELLULAR LOCATION</scope>
</reference>
<reference key="5">
    <citation type="journal article" date="2020" name="J. Virol.">
        <title>De Novo Cholesterol Biosynthesis and Its Trafficking in LAMP-1-Positive Vesicles Are Involved in Replication and Spread of Marek's Disease Virus.</title>
        <authorList>
            <person name="Boodhoo N."/>
            <person name="Kamble N."/>
            <person name="Behboudi S."/>
        </authorList>
    </citation>
    <scope>FUNCTION (MICROBIAL INFECTION)</scope>
</reference>
<sequence length="414" mass="44670">MGGAARAVLLGFLQASSSFDVRDSTGKVCIIANLTVAFSVEYKSSGQKQFAHFFLPQNATSQSHSSCGEGNTSHPILALSFGAGHLISLNFSKTLDKYQVEELTFHYNLSDETLFPNATEGKVMVATQKSVIQARIGTEYRCINSKYVRMKHVNITFSNVTLEAYPTNDTFSANKTECREDMVSTTTVAPTTPKHATSQVPTTSPAPTAAPSSPAVGKYNVTGANGTCVLASMGLQLNITYVKKDEKMGLDLLNFIPHNTSASGMCESTSAFLNLAFEKTKITFHFVLNASSEKFFLQGVNVSTTLPSEAKAPTFEASNDSMSESRATVGNSYKCSAEENFQVTDKALVNVFNVQVQAFKVDGDKFGAMEECQLDENNMLIPIIVGAALAGLVLIVLIAYLIGRKRSHAGYQTI</sequence>
<organism>
    <name type="scientific">Gallus gallus</name>
    <name type="common">Chicken</name>
    <dbReference type="NCBI Taxonomy" id="9031"/>
    <lineage>
        <taxon>Eukaryota</taxon>
        <taxon>Metazoa</taxon>
        <taxon>Chordata</taxon>
        <taxon>Craniata</taxon>
        <taxon>Vertebrata</taxon>
        <taxon>Euteleostomi</taxon>
        <taxon>Archelosauria</taxon>
        <taxon>Archosauria</taxon>
        <taxon>Dinosauria</taxon>
        <taxon>Saurischia</taxon>
        <taxon>Theropoda</taxon>
        <taxon>Coelurosauria</taxon>
        <taxon>Aves</taxon>
        <taxon>Neognathae</taxon>
        <taxon>Galloanserae</taxon>
        <taxon>Galliformes</taxon>
        <taxon>Phasianidae</taxon>
        <taxon>Phasianinae</taxon>
        <taxon>Gallus</taxon>
    </lineage>
</organism>
<dbReference type="EMBL" id="X07775">
    <property type="protein sequence ID" value="CAA30601.1"/>
    <property type="molecule type" value="mRNA"/>
</dbReference>
<dbReference type="EMBL" id="M59365">
    <property type="protein sequence ID" value="AAA65947.1"/>
    <property type="molecule type" value="Genomic_DNA"/>
</dbReference>
<dbReference type="EMBL" id="M59361">
    <property type="protein sequence ID" value="AAA65947.1"/>
    <property type="status" value="JOINED"/>
    <property type="molecule type" value="Genomic_DNA"/>
</dbReference>
<dbReference type="EMBL" id="M59362">
    <property type="protein sequence ID" value="AAA65947.1"/>
    <property type="status" value="JOINED"/>
    <property type="molecule type" value="Genomic_DNA"/>
</dbReference>
<dbReference type="EMBL" id="M59363">
    <property type="protein sequence ID" value="AAA65947.1"/>
    <property type="status" value="JOINED"/>
    <property type="molecule type" value="Genomic_DNA"/>
</dbReference>
<dbReference type="EMBL" id="M59364">
    <property type="protein sequence ID" value="AAA65947.1"/>
    <property type="status" value="JOINED"/>
    <property type="molecule type" value="Genomic_DNA"/>
</dbReference>
<dbReference type="PIR" id="A38331">
    <property type="entry name" value="A38331"/>
</dbReference>
<dbReference type="RefSeq" id="NP_990614.2">
    <property type="nucleotide sequence ID" value="NM_205283.2"/>
</dbReference>
<dbReference type="SMR" id="P05300"/>
<dbReference type="FunCoup" id="P05300">
    <property type="interactions" value="1885"/>
</dbReference>
<dbReference type="STRING" id="9031.ENSGALP00000052871"/>
<dbReference type="GlyCosmos" id="P05300">
    <property type="glycosylation" value="17 sites, No reported glycans"/>
</dbReference>
<dbReference type="GlyGen" id="P05300">
    <property type="glycosylation" value="19 sites"/>
</dbReference>
<dbReference type="PaxDb" id="9031-ENSGALP00000027119"/>
<dbReference type="GeneID" id="396220"/>
<dbReference type="KEGG" id="gga:396220"/>
<dbReference type="CTD" id="3916"/>
<dbReference type="VEuPathDB" id="HostDB:geneid_396220"/>
<dbReference type="eggNOG" id="KOG4818">
    <property type="taxonomic scope" value="Eukaryota"/>
</dbReference>
<dbReference type="InParanoid" id="P05300"/>
<dbReference type="OrthoDB" id="10037042at2759"/>
<dbReference type="PhylomeDB" id="P05300"/>
<dbReference type="PRO" id="PR:P05300"/>
<dbReference type="Proteomes" id="UP000000539">
    <property type="component" value="Unassembled WGS sequence"/>
</dbReference>
<dbReference type="GO" id="GO:0101004">
    <property type="term" value="C:cytolytic granule membrane"/>
    <property type="evidence" value="ECO:0000250"/>
    <property type="project" value="UniProtKB"/>
</dbReference>
<dbReference type="GO" id="GO:0010008">
    <property type="term" value="C:endosome membrane"/>
    <property type="evidence" value="ECO:0000314"/>
    <property type="project" value="UniProtKB"/>
</dbReference>
<dbReference type="GO" id="GO:0031902">
    <property type="term" value="C:late endosome membrane"/>
    <property type="evidence" value="ECO:0000318"/>
    <property type="project" value="GO_Central"/>
</dbReference>
<dbReference type="GO" id="GO:0005765">
    <property type="term" value="C:lysosomal membrane"/>
    <property type="evidence" value="ECO:0000314"/>
    <property type="project" value="UniProtKB"/>
</dbReference>
<dbReference type="GO" id="GO:0016020">
    <property type="term" value="C:membrane"/>
    <property type="evidence" value="ECO:0000314"/>
    <property type="project" value="AgBase"/>
</dbReference>
<dbReference type="GO" id="GO:0005886">
    <property type="term" value="C:plasma membrane"/>
    <property type="evidence" value="ECO:0000314"/>
    <property type="project" value="UniProtKB"/>
</dbReference>
<dbReference type="GO" id="GO:0008200">
    <property type="term" value="F:ion channel inhibitor activity"/>
    <property type="evidence" value="ECO:0000250"/>
    <property type="project" value="UniProtKB"/>
</dbReference>
<dbReference type="GO" id="GO:0072594">
    <property type="term" value="P:establishment of protein localization to organelle"/>
    <property type="evidence" value="ECO:0000318"/>
    <property type="project" value="GO_Central"/>
</dbReference>
<dbReference type="GO" id="GO:0007042">
    <property type="term" value="P:lysosomal lumen acidification"/>
    <property type="evidence" value="ECO:0000250"/>
    <property type="project" value="UniProtKB"/>
</dbReference>
<dbReference type="CDD" id="cd12087">
    <property type="entry name" value="TM_EGFR-like"/>
    <property type="match status" value="1"/>
</dbReference>
<dbReference type="FunFam" id="2.40.160.110:FF:000001">
    <property type="entry name" value="lysosome-associated membrane glycoprotein 2 isoform X2"/>
    <property type="match status" value="1"/>
</dbReference>
<dbReference type="Gene3D" id="2.40.160.110">
    <property type="match status" value="2"/>
</dbReference>
<dbReference type="InterPro" id="IPR048528">
    <property type="entry name" value="Lamp2-like_luminal"/>
</dbReference>
<dbReference type="InterPro" id="IPR048524">
    <property type="entry name" value="Lamp2-like_TM"/>
</dbReference>
<dbReference type="InterPro" id="IPR018134">
    <property type="entry name" value="LAMP_CS"/>
</dbReference>
<dbReference type="InterPro" id="IPR002000">
    <property type="entry name" value="Lysosome-assoc_membr_glycop"/>
</dbReference>
<dbReference type="PANTHER" id="PTHR11506">
    <property type="entry name" value="LYSOSOME-ASSOCIATED MEMBRANE GLYCOPROTEIN"/>
    <property type="match status" value="1"/>
</dbReference>
<dbReference type="PANTHER" id="PTHR11506:SF35">
    <property type="entry name" value="LYSOSOME-ASSOCIATED MEMBRANE GLYCOPROTEIN 5"/>
    <property type="match status" value="1"/>
</dbReference>
<dbReference type="Pfam" id="PF01299">
    <property type="entry name" value="Lamp2-like_luminal"/>
    <property type="match status" value="2"/>
</dbReference>
<dbReference type="Pfam" id="PF21222">
    <property type="entry name" value="Lamp2_2nd"/>
    <property type="match status" value="1"/>
</dbReference>
<dbReference type="PRINTS" id="PR00336">
    <property type="entry name" value="LYSASSOCTDMP"/>
</dbReference>
<dbReference type="PROSITE" id="PS00310">
    <property type="entry name" value="LAMP_1"/>
    <property type="match status" value="1"/>
</dbReference>
<dbReference type="PROSITE" id="PS00311">
    <property type="entry name" value="LAMP_2"/>
    <property type="match status" value="1"/>
</dbReference>
<dbReference type="PROSITE" id="PS51407">
    <property type="entry name" value="LAMP_3"/>
    <property type="match status" value="1"/>
</dbReference>
<protein>
    <recommendedName>
        <fullName evidence="8">Lysosome-associated membrane glycoprotein 1</fullName>
        <shortName evidence="8">LAMP-1</shortName>
        <shortName>Lysosome-associated membrane protein 1</shortName>
    </recommendedName>
    <alternativeName>
        <fullName evidence="9">Lysosome membrane glycoprotein LEP100</fullName>
    </alternativeName>
</protein>
<evidence type="ECO:0000250" key="1">
    <source>
        <dbReference type="UniProtKB" id="P11279"/>
    </source>
</evidence>
<evidence type="ECO:0000255" key="2"/>
<evidence type="ECO:0000255" key="3">
    <source>
        <dbReference type="PROSITE-ProRule" id="PRU00740"/>
    </source>
</evidence>
<evidence type="ECO:0000256" key="4">
    <source>
        <dbReference type="SAM" id="MobiDB-lite"/>
    </source>
</evidence>
<evidence type="ECO:0000269" key="5">
    <source>
    </source>
</evidence>
<evidence type="ECO:0000269" key="6">
    <source>
    </source>
</evidence>
<evidence type="ECO:0000269" key="7">
    <source>
    </source>
</evidence>
<evidence type="ECO:0000303" key="8">
    <source>
    </source>
</evidence>
<evidence type="ECO:0000303" key="9">
    <source>
    </source>
</evidence>
<evidence type="ECO:0000305" key="10"/>